<reference key="1">
    <citation type="journal article" date="1999" name="J. Cell Biol.">
        <title>Mouse ten-m/Odz is a new family of dimeric type II transmembrane proteins expressed in many tissues.</title>
        <authorList>
            <person name="Oohashi T."/>
            <person name="Zhou X.-H."/>
            <person name="Feng K."/>
            <person name="Richter B."/>
            <person name="Moergelin M."/>
            <person name="Perez M.T."/>
            <person name="Su W.D."/>
            <person name="Chiquet-Ehrismann R."/>
            <person name="Rauch U."/>
            <person name="Faessler R."/>
        </authorList>
    </citation>
    <scope>NUCLEOTIDE SEQUENCE [MRNA]</scope>
    <scope>SUBUNIT</scope>
    <scope>TOPOLOGY</scope>
    <scope>SUBCELLULAR LOCATION</scope>
    <scope>TISSUE SPECIFICITY</scope>
    <source>
        <strain>BALB/cJ</strain>
        <tissue>Brain</tissue>
    </source>
</reference>
<reference key="2">
    <citation type="journal article" date="2005" name="Science">
        <title>The transcriptional landscape of the mammalian genome.</title>
        <authorList>
            <person name="Carninci P."/>
            <person name="Kasukawa T."/>
            <person name="Katayama S."/>
            <person name="Gough J."/>
            <person name="Frith M.C."/>
            <person name="Maeda N."/>
            <person name="Oyama R."/>
            <person name="Ravasi T."/>
            <person name="Lenhard B."/>
            <person name="Wells C."/>
            <person name="Kodzius R."/>
            <person name="Shimokawa K."/>
            <person name="Bajic V.B."/>
            <person name="Brenner S.E."/>
            <person name="Batalov S."/>
            <person name="Forrest A.R."/>
            <person name="Zavolan M."/>
            <person name="Davis M.J."/>
            <person name="Wilming L.G."/>
            <person name="Aidinis V."/>
            <person name="Allen J.E."/>
            <person name="Ambesi-Impiombato A."/>
            <person name="Apweiler R."/>
            <person name="Aturaliya R.N."/>
            <person name="Bailey T.L."/>
            <person name="Bansal M."/>
            <person name="Baxter L."/>
            <person name="Beisel K.W."/>
            <person name="Bersano T."/>
            <person name="Bono H."/>
            <person name="Chalk A.M."/>
            <person name="Chiu K.P."/>
            <person name="Choudhary V."/>
            <person name="Christoffels A."/>
            <person name="Clutterbuck D.R."/>
            <person name="Crowe M.L."/>
            <person name="Dalla E."/>
            <person name="Dalrymple B.P."/>
            <person name="de Bono B."/>
            <person name="Della Gatta G."/>
            <person name="di Bernardo D."/>
            <person name="Down T."/>
            <person name="Engstrom P."/>
            <person name="Fagiolini M."/>
            <person name="Faulkner G."/>
            <person name="Fletcher C.F."/>
            <person name="Fukushima T."/>
            <person name="Furuno M."/>
            <person name="Futaki S."/>
            <person name="Gariboldi M."/>
            <person name="Georgii-Hemming P."/>
            <person name="Gingeras T.R."/>
            <person name="Gojobori T."/>
            <person name="Green R.E."/>
            <person name="Gustincich S."/>
            <person name="Harbers M."/>
            <person name="Hayashi Y."/>
            <person name="Hensch T.K."/>
            <person name="Hirokawa N."/>
            <person name="Hill D."/>
            <person name="Huminiecki L."/>
            <person name="Iacono M."/>
            <person name="Ikeo K."/>
            <person name="Iwama A."/>
            <person name="Ishikawa T."/>
            <person name="Jakt M."/>
            <person name="Kanapin A."/>
            <person name="Katoh M."/>
            <person name="Kawasawa Y."/>
            <person name="Kelso J."/>
            <person name="Kitamura H."/>
            <person name="Kitano H."/>
            <person name="Kollias G."/>
            <person name="Krishnan S.P."/>
            <person name="Kruger A."/>
            <person name="Kummerfeld S.K."/>
            <person name="Kurochkin I.V."/>
            <person name="Lareau L.F."/>
            <person name="Lazarevic D."/>
            <person name="Lipovich L."/>
            <person name="Liu J."/>
            <person name="Liuni S."/>
            <person name="McWilliam S."/>
            <person name="Madan Babu M."/>
            <person name="Madera M."/>
            <person name="Marchionni L."/>
            <person name="Matsuda H."/>
            <person name="Matsuzawa S."/>
            <person name="Miki H."/>
            <person name="Mignone F."/>
            <person name="Miyake S."/>
            <person name="Morris K."/>
            <person name="Mottagui-Tabar S."/>
            <person name="Mulder N."/>
            <person name="Nakano N."/>
            <person name="Nakauchi H."/>
            <person name="Ng P."/>
            <person name="Nilsson R."/>
            <person name="Nishiguchi S."/>
            <person name="Nishikawa S."/>
            <person name="Nori F."/>
            <person name="Ohara O."/>
            <person name="Okazaki Y."/>
            <person name="Orlando V."/>
            <person name="Pang K.C."/>
            <person name="Pavan W.J."/>
            <person name="Pavesi G."/>
            <person name="Pesole G."/>
            <person name="Petrovsky N."/>
            <person name="Piazza S."/>
            <person name="Reed J."/>
            <person name="Reid J.F."/>
            <person name="Ring B.Z."/>
            <person name="Ringwald M."/>
            <person name="Rost B."/>
            <person name="Ruan Y."/>
            <person name="Salzberg S.L."/>
            <person name="Sandelin A."/>
            <person name="Schneider C."/>
            <person name="Schoenbach C."/>
            <person name="Sekiguchi K."/>
            <person name="Semple C.A."/>
            <person name="Seno S."/>
            <person name="Sessa L."/>
            <person name="Sheng Y."/>
            <person name="Shibata Y."/>
            <person name="Shimada H."/>
            <person name="Shimada K."/>
            <person name="Silva D."/>
            <person name="Sinclair B."/>
            <person name="Sperling S."/>
            <person name="Stupka E."/>
            <person name="Sugiura K."/>
            <person name="Sultana R."/>
            <person name="Takenaka Y."/>
            <person name="Taki K."/>
            <person name="Tammoja K."/>
            <person name="Tan S.L."/>
            <person name="Tang S."/>
            <person name="Taylor M.S."/>
            <person name="Tegner J."/>
            <person name="Teichmann S.A."/>
            <person name="Ueda H.R."/>
            <person name="van Nimwegen E."/>
            <person name="Verardo R."/>
            <person name="Wei C.L."/>
            <person name="Yagi K."/>
            <person name="Yamanishi H."/>
            <person name="Zabarovsky E."/>
            <person name="Zhu S."/>
            <person name="Zimmer A."/>
            <person name="Hide W."/>
            <person name="Bult C."/>
            <person name="Grimmond S.M."/>
            <person name="Teasdale R.D."/>
            <person name="Liu E.T."/>
            <person name="Brusic V."/>
            <person name="Quackenbush J."/>
            <person name="Wahlestedt C."/>
            <person name="Mattick J.S."/>
            <person name="Hume D.A."/>
            <person name="Kai C."/>
            <person name="Sasaki D."/>
            <person name="Tomaru Y."/>
            <person name="Fukuda S."/>
            <person name="Kanamori-Katayama M."/>
            <person name="Suzuki M."/>
            <person name="Aoki J."/>
            <person name="Arakawa T."/>
            <person name="Iida J."/>
            <person name="Imamura K."/>
            <person name="Itoh M."/>
            <person name="Kato T."/>
            <person name="Kawaji H."/>
            <person name="Kawagashira N."/>
            <person name="Kawashima T."/>
            <person name="Kojima M."/>
            <person name="Kondo S."/>
            <person name="Konno H."/>
            <person name="Nakano K."/>
            <person name="Ninomiya N."/>
            <person name="Nishio T."/>
            <person name="Okada M."/>
            <person name="Plessy C."/>
            <person name="Shibata K."/>
            <person name="Shiraki T."/>
            <person name="Suzuki S."/>
            <person name="Tagami M."/>
            <person name="Waki K."/>
            <person name="Watahiki A."/>
            <person name="Okamura-Oho Y."/>
            <person name="Suzuki H."/>
            <person name="Kawai J."/>
            <person name="Hayashizaki Y."/>
        </authorList>
    </citation>
    <scope>NUCLEOTIDE SEQUENCE [LARGE SCALE MRNA]</scope>
    <source>
        <strain>C57BL/6J</strain>
        <tissue>Thymus</tissue>
    </source>
</reference>
<reference key="3">
    <citation type="journal article" date="2002" name="J. Biol. Chem.">
        <title>All four members of the Ten-m/Odz family of transmembrane proteins form dimers.</title>
        <authorList>
            <person name="Feng K."/>
            <person name="Zhou X.H."/>
            <person name="Oohashi T."/>
            <person name="Morgelin M."/>
            <person name="Lustig A."/>
            <person name="Hirakawa S."/>
            <person name="Ninomiya Y."/>
            <person name="Engel J."/>
            <person name="Rauch U."/>
            <person name="Fassler R."/>
        </authorList>
    </citation>
    <scope>HOMODIMERIZATION</scope>
    <scope>HETERODIMERIZATION</scope>
</reference>
<reference key="4">
    <citation type="journal article" date="2003" name="Gene Expr. Patterns">
        <title>The murine Ten-m/Odz genes show distinct but overlapping expression patterns during development and in adult brain.</title>
        <authorList>
            <person name="Zhou X.H."/>
            <person name="Brandau O."/>
            <person name="Feng K."/>
            <person name="Oohashi T."/>
            <person name="Ninomiya Y."/>
            <person name="Rauch U."/>
            <person name="Fassler R."/>
        </authorList>
    </citation>
    <scope>TISSUE SPECIFICITY</scope>
</reference>
<reference key="5">
    <citation type="journal article" date="2005" name="Brain Res. Mol. Brain Res.">
        <title>Teneurin proteins possess a carboxy terminal sequence with neuromodulatory activity.</title>
        <authorList>
            <person name="Wang L."/>
            <person name="Rotzinger S."/>
            <person name="Al Chawaf A."/>
            <person name="Elias C.F."/>
            <person name="Barsyte-Lovejoy D."/>
            <person name="Qian X."/>
            <person name="Wang N.C."/>
            <person name="De Cristofaro A."/>
            <person name="Belsham D."/>
            <person name="Bittencourt J.C."/>
            <person name="Vaccarino F."/>
            <person name="Lovejoy D.A."/>
        </authorList>
    </citation>
    <scope>FUNCTION OF ISOFORM 2 IN CELL PROLIFERATION</scope>
    <scope>TISSUE SPECIFICITY</scope>
</reference>
<reference key="6">
    <citation type="journal article" date="2005" name="Exp. Cell Res.">
        <title>The intracellular domain of teneurin-1 interacts with MBD1 and CAP/ponsin resulting in subcellular codistribution and translocation to the nuclear matrix.</title>
        <authorList>
            <person name="Nunes S.M."/>
            <person name="Ferralli J."/>
            <person name="Choi K."/>
            <person name="Brown-Luedi M."/>
            <person name="Minet A.D."/>
            <person name="Chiquet-Ehrismann R."/>
        </authorList>
    </citation>
    <scope>INTERACTION WITH MBD1 AND SORBS1</scope>
</reference>
<reference key="7">
    <citation type="journal article" date="2007" name="Brain Res.">
        <title>Teneurin carboxy (C)-terminal associated peptide-1 inhibits alkalosis-associated necrotic neuronal death by stimulating superoxide dismutase and catalase activity in immortalized mouse hypothalamic cells.</title>
        <authorList>
            <person name="Trubiani G."/>
            <person name="Al Chawaf A."/>
            <person name="Belsham D.D."/>
            <person name="Barsyte-Lovejoy D."/>
            <person name="Lovejoy D.A."/>
        </authorList>
    </citation>
    <scope>FUNCTION OF ISOFORM 2 IN CELL SURVIVAL</scope>
</reference>
<reference key="8">
    <citation type="journal article" date="2007" name="Neuroscience">
        <title>Regulation of neurite growth in immortalized mouse hypothalamic neurons and rat hippocampal primary cultures by teneurin C-terminal-associated peptide-1.</title>
        <authorList>
            <person name="Al Chawaf A."/>
            <person name="St Amant K."/>
            <person name="Belsham D."/>
            <person name="Lovejoy D.A."/>
        </authorList>
    </citation>
    <scope>FUNCTION OF ISOFORM 2 IN AXON GROWTH</scope>
</reference>
<reference key="9">
    <citation type="journal article" date="2007" name="Peptides">
        <title>Corticotropin-releasing factor (CRF)-induced behaviors are modulated by intravenous administration of teneurin C-terminal associated peptide-1 (TCAP-1).</title>
        <authorList>
            <person name="Al Chawaf A."/>
            <person name="Xu K."/>
            <person name="Tan L."/>
            <person name="Vaccarino F.J."/>
            <person name="Lovejoy D.A."/>
            <person name="Rotzinger S."/>
        </authorList>
    </citation>
    <scope>FUNCTION OF ISOFORM 2 IN STRESS RESPONSE</scope>
</reference>
<reference key="10">
    <citation type="journal article" date="2008" name="Behav. Brain Res.">
        <title>Repeated intracerebral teneurin C-terminal associated peptide (TCAP)-1 injections produce enduring changes in behavioral responses to corticotropin-releasing factor (CRF) in rat models of anxiety.</title>
        <authorList>
            <person name="Tan L.A."/>
            <person name="Xu K."/>
            <person name="Vaccarino F.J."/>
            <person name="Lovejoy D.A."/>
            <person name="Rotzinger S."/>
        </authorList>
    </citation>
    <scope>FUNCTION OF ISOFORM 2 IN STRESS RESPONSE</scope>
</reference>
<reference key="11">
    <citation type="journal article" date="2009" name="Behav. Brain Res.">
        <title>Teneurin C-terminal associated peptide (TCAP)-1 attenuates corticotropin-releasing factor (CRF)-induced c-Fos expression in the limbic system and modulates anxiety behavior in male Wistar rats.</title>
        <authorList>
            <person name="Tan L.A."/>
            <person name="Xu K."/>
            <person name="Vaccarino F.J."/>
            <person name="Lovejoy D.A."/>
            <person name="Rotzinger S."/>
        </authorList>
    </citation>
    <scope>FUNCTION OF ISOFORM 2 IN STRESS RESPONSE</scope>
</reference>
<reference key="12">
    <citation type="journal article" date="2010" name="Cell">
        <title>A tissue-specific atlas of mouse protein phosphorylation and expression.</title>
        <authorList>
            <person name="Huttlin E.L."/>
            <person name="Jedrychowski M.P."/>
            <person name="Elias J.E."/>
            <person name="Goswami T."/>
            <person name="Rad R."/>
            <person name="Beausoleil S.A."/>
            <person name="Villen J."/>
            <person name="Haas W."/>
            <person name="Sowa M.E."/>
            <person name="Gygi S.P."/>
        </authorList>
    </citation>
    <scope>PHOSPHORYLATION [LARGE SCALE ANALYSIS] AT SER-105; THR-109 AND SER-116</scope>
    <scope>IDENTIFICATION BY MASS SPECTROMETRY [LARGE SCALE ANALYSIS]</scope>
    <source>
        <tissue>Brain</tissue>
    </source>
</reference>
<reference key="13">
    <citation type="journal article" date="2011" name="Br. J. Pharmacol.">
        <title>Teneurin C-terminal associated peptide-1 blocks the effects of corticotropin-releasing factor on reinstatement of cocaine seeking and on cocaine-induced behavioural sensitization.</title>
        <authorList>
            <person name="Kupferschmidt D.A."/>
            <person name="Lovejoy D.A."/>
            <person name="Rotzinger S."/>
            <person name="Erb S."/>
        </authorList>
    </citation>
    <scope>FUNCTION OF ISOFORM 2 IN STRESS RESPONSE</scope>
</reference>
<reference key="14">
    <citation type="journal article" date="2011" name="Physiol. Behav.">
        <title>Teneurin C-terminal associated peptide (TCAP)-1 modulates dendritic morphology in hippocampal neurons and decreases anxiety-like behaviors in rats.</title>
        <authorList>
            <person name="Tan L.A."/>
            <person name="Al Chawaf A."/>
            <person name="Vaccarino F.J."/>
            <person name="Boutros P.C."/>
            <person name="Lovejoy D.A."/>
        </authorList>
    </citation>
    <scope>FUNCTION OF ISOFORM 2 IN AXON MORPHOLOGY</scope>
</reference>
<reference key="15">
    <citation type="journal article" date="2013" name="Mol. Cell. Neurosci.">
        <title>C-terminal processing of the teneurin proteins: Independent actions of a teneurin C-terminal associated peptide in hippocampal cells.</title>
        <authorList>
            <person name="Chand D."/>
            <person name="Casatti C.A."/>
            <person name="de Lannoy L."/>
            <person name="Song L."/>
            <person name="Kollara A."/>
            <person name="Barsyte-Lovejoy D."/>
            <person name="Brown T.J."/>
            <person name="Lovejoy D.A."/>
        </authorList>
    </citation>
    <scope>PROTEOLYTIC PROCESSING</scope>
    <scope>SUBCELLULAR LOCATION (ISOFORMS 1 AND 2)</scope>
    <scope>TISSUE SPECIFICITY</scope>
    <scope>DEVELOPMENTAL STAGE</scope>
</reference>
<reference key="16">
    <citation type="journal article" date="2012" name="Neuroscience">
        <title>C-Terminal region of teneurin-1 co-localizes with dystroglycan and modulates cytoskeletal organization through an extracellular signal-regulated kinase-dependent stathmin- and filamin A-mediated mechanism in hippocampal cells.</title>
        <authorList>
            <person name="Chand D."/>
            <person name="Song L."/>
            <person name="deLannoy L."/>
            <person name="Barsyte-Lovejoy D."/>
            <person name="Ackloo S."/>
            <person name="Boutros P.C."/>
            <person name="Evans K."/>
            <person name="Belsham D.D."/>
            <person name="Lovejoy D.A."/>
        </authorList>
    </citation>
    <scope>FUNCTION OF ISOFORM 2 IN REORGANIZATION OF CYTOSKELETON</scope>
    <scope>SUBCELLULAR LOCATION (ISOFORM 2)</scope>
</reference>
<reference key="17">
    <citation type="journal article" date="2012" name="Regul. Pept.">
        <title>Identification of a novel brain derived neurotrophic factor (BDNF)-inhibitory factor: regulation of BDNF by teneurin C-terminal associated peptide (TCAP)-1 in immortalized embryonic mouse hypothalamic cells.</title>
        <authorList>
            <person name="Ng T."/>
            <person name="Chand D."/>
            <person name="Song L."/>
            <person name="Al Chawaf A."/>
            <person name="Watson J.D."/>
            <person name="Boutros P.C."/>
            <person name="Belsham D.D."/>
            <person name="Lovejoy D.A."/>
        </authorList>
    </citation>
    <scope>FUNCTION OF ISOFORM 2 IN BDNF INHIBITION</scope>
    <scope>SUBCELLULAR LOCATION (ISOFORM 2)</scope>
</reference>
<reference key="18">
    <citation type="journal article" date="2019" name="Antioxid. Redox Signal.">
        <title>The Axonal Motor Neuropathy-Related HINT1 Protein Is a Zinc- and Calmodulin-Regulated Cysteine SUMO Protease.</title>
        <authorList>
            <person name="Cortes-Montero E."/>
            <person name="Rodriguez-Munoz M."/>
            <person name="Sanchez-Blazquez P."/>
            <person name="Garzon J."/>
        </authorList>
    </citation>
    <scope>INTERACTION WITH HINT1</scope>
</reference>
<gene>
    <name type="primary">Tenm1</name>
    <name type="synonym">Odz1</name>
    <name type="synonym">Tnm1</name>
</gene>
<dbReference type="EMBL" id="AB025410">
    <property type="protein sequence ID" value="BAA77396.1"/>
    <property type="molecule type" value="mRNA"/>
</dbReference>
<dbReference type="EMBL" id="AK037897">
    <property type="protein sequence ID" value="BAC29893.1"/>
    <property type="molecule type" value="mRNA"/>
</dbReference>
<dbReference type="CCDS" id="CCDS40953.1">
    <molecule id="Q9WTS4-1"/>
</dbReference>
<dbReference type="RefSeq" id="NP_035985.2">
    <molecule id="Q9WTS4-1"/>
    <property type="nucleotide sequence ID" value="NM_011855.4"/>
</dbReference>
<dbReference type="RefSeq" id="XP_011249307.1">
    <molecule id="Q9WTS4-1"/>
    <property type="nucleotide sequence ID" value="XM_011251005.4"/>
</dbReference>
<dbReference type="RefSeq" id="XP_011249308.1">
    <molecule id="Q9WTS4-1"/>
    <property type="nucleotide sequence ID" value="XM_011251006.4"/>
</dbReference>
<dbReference type="RefSeq" id="XP_011249309.1">
    <molecule id="Q9WTS4-1"/>
    <property type="nucleotide sequence ID" value="XM_011251007.4"/>
</dbReference>
<dbReference type="RefSeq" id="XP_017173972.1">
    <molecule id="Q9WTS4-1"/>
    <property type="nucleotide sequence ID" value="XM_017318483.2"/>
</dbReference>
<dbReference type="RefSeq" id="XP_017173973.1">
    <molecule id="Q9WTS4-1"/>
    <property type="nucleotide sequence ID" value="XM_017318484.3"/>
</dbReference>
<dbReference type="SMR" id="Q9WTS4"/>
<dbReference type="BioGRID" id="204824">
    <property type="interactions" value="6"/>
</dbReference>
<dbReference type="FunCoup" id="Q9WTS4">
    <property type="interactions" value="951"/>
</dbReference>
<dbReference type="IntAct" id="Q9WTS4">
    <property type="interactions" value="2"/>
</dbReference>
<dbReference type="MINT" id="Q9WTS4"/>
<dbReference type="STRING" id="10090.ENSMUSP00000110711"/>
<dbReference type="GlyConnect" id="2755">
    <property type="glycosylation" value="3 N-Linked glycans (3 sites)"/>
</dbReference>
<dbReference type="GlyCosmos" id="Q9WTS4">
    <property type="glycosylation" value="14 sites, 3 glycans"/>
</dbReference>
<dbReference type="GlyGen" id="Q9WTS4">
    <property type="glycosylation" value="17 sites, 8 N-linked glycans (9 sites), 1 O-linked glycan (2 sites)"/>
</dbReference>
<dbReference type="iPTMnet" id="Q9WTS4"/>
<dbReference type="PhosphoSitePlus" id="Q9WTS4"/>
<dbReference type="CPTAC" id="non-CPTAC-4065"/>
<dbReference type="PaxDb" id="10090-ENSMUSP00000110711"/>
<dbReference type="ProteomicsDB" id="262867">
    <molecule id="Q9WTS4-1"/>
</dbReference>
<dbReference type="ProteomicsDB" id="262868">
    <molecule id="Q9WTS4-2"/>
</dbReference>
<dbReference type="Antibodypedia" id="482">
    <property type="antibodies" value="116 antibodies from 26 providers"/>
</dbReference>
<dbReference type="DNASU" id="23963"/>
<dbReference type="Ensembl" id="ENSMUST00000016294.8">
    <molecule id="Q9WTS4-1"/>
    <property type="protein sequence ID" value="ENSMUSP00000016294.8"/>
    <property type="gene ID" value="ENSMUSG00000016150.16"/>
</dbReference>
<dbReference type="Ensembl" id="ENSMUST00000115059.8">
    <molecule id="Q9WTS4-1"/>
    <property type="protein sequence ID" value="ENSMUSP00000110711.2"/>
    <property type="gene ID" value="ENSMUSG00000016150.16"/>
</dbReference>
<dbReference type="GeneID" id="23963"/>
<dbReference type="KEGG" id="mmu:23963"/>
<dbReference type="UCSC" id="uc009tbc.1">
    <molecule id="Q9WTS4-1"/>
    <property type="organism name" value="mouse"/>
</dbReference>
<dbReference type="AGR" id="MGI:1345185"/>
<dbReference type="CTD" id="10178"/>
<dbReference type="MGI" id="MGI:1345185">
    <property type="gene designation" value="Tenm1"/>
</dbReference>
<dbReference type="VEuPathDB" id="HostDB:ENSMUSG00000016150"/>
<dbReference type="eggNOG" id="KOG4659">
    <property type="taxonomic scope" value="Eukaryota"/>
</dbReference>
<dbReference type="GeneTree" id="ENSGT01030000234566"/>
<dbReference type="HOGENOM" id="CLU_000229_0_0_1"/>
<dbReference type="InParanoid" id="Q9WTS4"/>
<dbReference type="OMA" id="DNMGRMI"/>
<dbReference type="OrthoDB" id="442731at2759"/>
<dbReference type="PhylomeDB" id="Q9WTS4"/>
<dbReference type="TreeFam" id="TF316833"/>
<dbReference type="BioGRID-ORCS" id="23963">
    <property type="hits" value="2 hits in 77 CRISPR screens"/>
</dbReference>
<dbReference type="ChiTaRS" id="Tenm1">
    <property type="organism name" value="mouse"/>
</dbReference>
<dbReference type="PRO" id="PR:Q9WTS4"/>
<dbReference type="Proteomes" id="UP000000589">
    <property type="component" value="Chromosome X"/>
</dbReference>
<dbReference type="RNAct" id="Q9WTS4">
    <property type="molecule type" value="protein"/>
</dbReference>
<dbReference type="Bgee" id="ENSMUSG00000016150">
    <property type="expression patterns" value="Expressed in substantia nigra and 116 other cell types or tissues"/>
</dbReference>
<dbReference type="ExpressionAtlas" id="Q9WTS4">
    <property type="expression patterns" value="baseline and differential"/>
</dbReference>
<dbReference type="GO" id="GO:0005737">
    <property type="term" value="C:cytoplasm"/>
    <property type="evidence" value="ECO:0000314"/>
    <property type="project" value="UniProtKB"/>
</dbReference>
<dbReference type="GO" id="GO:0005856">
    <property type="term" value="C:cytoskeleton"/>
    <property type="evidence" value="ECO:0000250"/>
    <property type="project" value="UniProtKB"/>
</dbReference>
<dbReference type="GO" id="GO:0005783">
    <property type="term" value="C:endoplasmic reticulum"/>
    <property type="evidence" value="ECO:0000250"/>
    <property type="project" value="UniProtKB"/>
</dbReference>
<dbReference type="GO" id="GO:0005576">
    <property type="term" value="C:extracellular region"/>
    <property type="evidence" value="ECO:0000314"/>
    <property type="project" value="UniProtKB"/>
</dbReference>
<dbReference type="GO" id="GO:0005794">
    <property type="term" value="C:Golgi apparatus"/>
    <property type="evidence" value="ECO:0000250"/>
    <property type="project" value="UniProtKB"/>
</dbReference>
<dbReference type="GO" id="GO:0016363">
    <property type="term" value="C:nuclear matrix"/>
    <property type="evidence" value="ECO:0000250"/>
    <property type="project" value="UniProtKB"/>
</dbReference>
<dbReference type="GO" id="GO:0016607">
    <property type="term" value="C:nuclear speck"/>
    <property type="evidence" value="ECO:0000250"/>
    <property type="project" value="UniProtKB"/>
</dbReference>
<dbReference type="GO" id="GO:0005634">
    <property type="term" value="C:nucleus"/>
    <property type="evidence" value="ECO:0000250"/>
    <property type="project" value="UniProtKB"/>
</dbReference>
<dbReference type="GO" id="GO:0005886">
    <property type="term" value="C:plasma membrane"/>
    <property type="evidence" value="ECO:0000314"/>
    <property type="project" value="UniProtKB"/>
</dbReference>
<dbReference type="GO" id="GO:0042802">
    <property type="term" value="F:identical protein binding"/>
    <property type="evidence" value="ECO:0000353"/>
    <property type="project" value="MGI"/>
</dbReference>
<dbReference type="GO" id="GO:0046982">
    <property type="term" value="F:protein heterodimerization activity"/>
    <property type="evidence" value="ECO:0000314"/>
    <property type="project" value="UniProtKB"/>
</dbReference>
<dbReference type="GO" id="GO:0042803">
    <property type="term" value="F:protein homodimerization activity"/>
    <property type="evidence" value="ECO:0000314"/>
    <property type="project" value="UniProtKB"/>
</dbReference>
<dbReference type="GO" id="GO:0007218">
    <property type="term" value="P:neuropeptide signaling pathway"/>
    <property type="evidence" value="ECO:0007669"/>
    <property type="project" value="UniProtKB-KW"/>
</dbReference>
<dbReference type="GO" id="GO:0090316">
    <property type="term" value="P:positive regulation of intracellular protein transport"/>
    <property type="evidence" value="ECO:0000250"/>
    <property type="project" value="UniProtKB"/>
</dbReference>
<dbReference type="CDD" id="cd00054">
    <property type="entry name" value="EGF_CA"/>
    <property type="match status" value="1"/>
</dbReference>
<dbReference type="FunFam" id="2.180.10.10:FF:000019">
    <property type="entry name" value="Teneurin transmembrane protein 1"/>
    <property type="match status" value="1"/>
</dbReference>
<dbReference type="FunFam" id="2.10.25.10:FF:000016">
    <property type="entry name" value="Teneurin transmembrane protein 2"/>
    <property type="match status" value="1"/>
</dbReference>
<dbReference type="FunFam" id="2.10.25.10:FF:000021">
    <property type="entry name" value="Teneurin transmembrane protein 2"/>
    <property type="match status" value="2"/>
</dbReference>
<dbReference type="FunFam" id="2.10.25.10:FF:000013">
    <property type="entry name" value="Teneurin transmembrane protein 4"/>
    <property type="match status" value="1"/>
</dbReference>
<dbReference type="FunFam" id="2.120.10.30:FF:000005">
    <property type="entry name" value="Teneurin transmembrane protein 4"/>
    <property type="match status" value="1"/>
</dbReference>
<dbReference type="FunFam" id="2.120.10.30:FF:000006">
    <property type="entry name" value="Teneurin transmembrane protein 4"/>
    <property type="match status" value="1"/>
</dbReference>
<dbReference type="FunFam" id="2.10.25.10:FF:000169">
    <property type="entry name" value="teneurin-1 isoform X1"/>
    <property type="match status" value="1"/>
</dbReference>
<dbReference type="Gene3D" id="2.60.120.260">
    <property type="entry name" value="Galactose-binding domain-like"/>
    <property type="match status" value="1"/>
</dbReference>
<dbReference type="Gene3D" id="2.10.25.10">
    <property type="entry name" value="Laminin"/>
    <property type="match status" value="5"/>
</dbReference>
<dbReference type="Gene3D" id="2.180.10.10">
    <property type="entry name" value="RHS repeat-associated core"/>
    <property type="match status" value="1"/>
</dbReference>
<dbReference type="Gene3D" id="2.120.10.30">
    <property type="entry name" value="TolB, C-terminal domain"/>
    <property type="match status" value="2"/>
</dbReference>
<dbReference type="InterPro" id="IPR011042">
    <property type="entry name" value="6-blade_b-propeller_TolB-like"/>
</dbReference>
<dbReference type="InterPro" id="IPR000742">
    <property type="entry name" value="EGF-like_dom"/>
</dbReference>
<dbReference type="InterPro" id="IPR009471">
    <property type="entry name" value="Ten_N"/>
</dbReference>
<dbReference type="InterPro" id="IPR056822">
    <property type="entry name" value="TEN_NHL"/>
</dbReference>
<dbReference type="InterPro" id="IPR056820">
    <property type="entry name" value="TEN_TTR-like"/>
</dbReference>
<dbReference type="InterPro" id="IPR056823">
    <property type="entry name" value="TEN_YD-shell"/>
</dbReference>
<dbReference type="InterPro" id="IPR051216">
    <property type="entry name" value="Teneurin"/>
</dbReference>
<dbReference type="InterPro" id="IPR028916">
    <property type="entry name" value="Tox-GHH_dom"/>
</dbReference>
<dbReference type="InterPro" id="IPR006530">
    <property type="entry name" value="YD"/>
</dbReference>
<dbReference type="NCBIfam" id="TIGR01643">
    <property type="entry name" value="YD_repeat_2x"/>
    <property type="match status" value="3"/>
</dbReference>
<dbReference type="PANTHER" id="PTHR11219">
    <property type="entry name" value="TENEURIN AND N-ACETYLGLUCOSAMINE-1-PHOSPHODIESTER ALPHA-N-ACETYLGLUCOSAMINIDASE"/>
    <property type="match status" value="1"/>
</dbReference>
<dbReference type="PANTHER" id="PTHR11219:SF7">
    <property type="entry name" value="TENEURIN-1"/>
    <property type="match status" value="1"/>
</dbReference>
<dbReference type="Pfam" id="PF25024">
    <property type="entry name" value="EGF_TEN"/>
    <property type="match status" value="1"/>
</dbReference>
<dbReference type="Pfam" id="PF24329">
    <property type="entry name" value="FN-plug_TEN1-4"/>
    <property type="match status" value="1"/>
</dbReference>
<dbReference type="Pfam" id="PF23093">
    <property type="entry name" value="GBD_Tenm3"/>
    <property type="match status" value="1"/>
</dbReference>
<dbReference type="Pfam" id="PF06484">
    <property type="entry name" value="Ten_N"/>
    <property type="match status" value="2"/>
</dbReference>
<dbReference type="Pfam" id="PF25021">
    <property type="entry name" value="TEN_NHL"/>
    <property type="match status" value="1"/>
</dbReference>
<dbReference type="Pfam" id="PF25023">
    <property type="entry name" value="TEN_YD-shell"/>
    <property type="match status" value="1"/>
</dbReference>
<dbReference type="Pfam" id="PF23538">
    <property type="entry name" value="Teneurin_ABD"/>
    <property type="match status" value="1"/>
</dbReference>
<dbReference type="Pfam" id="PF15636">
    <property type="entry name" value="Tox-GHH"/>
    <property type="match status" value="1"/>
</dbReference>
<dbReference type="Pfam" id="PF25020">
    <property type="entry name" value="TTR_TEN1-4"/>
    <property type="match status" value="1"/>
</dbReference>
<dbReference type="SMART" id="SM00181">
    <property type="entry name" value="EGF"/>
    <property type="match status" value="8"/>
</dbReference>
<dbReference type="SUPFAM" id="SSF63829">
    <property type="entry name" value="Calcium-dependent phosphotriesterase"/>
    <property type="match status" value="1"/>
</dbReference>
<dbReference type="SUPFAM" id="SSF57196">
    <property type="entry name" value="EGF/Laminin"/>
    <property type="match status" value="1"/>
</dbReference>
<dbReference type="SUPFAM" id="SSF101898">
    <property type="entry name" value="NHL repeat"/>
    <property type="match status" value="1"/>
</dbReference>
<dbReference type="PROSITE" id="PS00022">
    <property type="entry name" value="EGF_1"/>
    <property type="match status" value="8"/>
</dbReference>
<dbReference type="PROSITE" id="PS01186">
    <property type="entry name" value="EGF_2"/>
    <property type="match status" value="7"/>
</dbReference>
<dbReference type="PROSITE" id="PS50026">
    <property type="entry name" value="EGF_3"/>
    <property type="match status" value="5"/>
</dbReference>
<dbReference type="PROSITE" id="PS51361">
    <property type="entry name" value="TENEURIN_N"/>
    <property type="match status" value="1"/>
</dbReference>
<comment type="function">
    <text evidence="1">Involved in neural development, regulating the establishment of proper connectivity within the nervous system. May function as a cellular signal transducer (By similarity).</text>
</comment>
<comment type="function">
    <molecule>Teneurin C-terminal-associated peptide</molecule>
    <text evidence="9 11 12 13 14 15 16 17 18 19">Plays a role in the regulation of neuroplasticity in the limbic system. Mediates a rapid reorganization of actin- and tubulin-based cytoskeleton elements with an increase in dendritic arborization and spine density formation of neurons in the hippocampus and amygdala. Induces BDNF transcription inhibition in neurons. Activates the mitogen-activated protein (MAP) kinase 2 (MEK2) and extracellular signal-regulated kinase (ERK) cascade. Also acts as a bioactive neuroprotective peptide on limbic neurons of the brain and regulates stress-induced behavior: attenuates alkalosis-associated necrotic cell death and the effects of corticotropin-releasing factor (CRF) on c-fos/FOS induction and on the reinstatement of cocaine seeking.</text>
</comment>
<comment type="function">
    <molecule>Ten-1 intracellular domain</molecule>
    <text evidence="1">Induces gene transcription activation.</text>
</comment>
<comment type="subunit">
    <text evidence="7 10 21">Homodimer; disulfide-linked. Heterodimer with either TENM2 or TENM3. May also form heterodimer with TENM4. Ten-1 ICD interacts with SORBS1 (via third SH3 domain). Interacts with MBD1 isoform 2 (PubMed:15777793). Ten-1 ICD interacts with HINT1 (PubMed:31088288).</text>
</comment>
<comment type="subcellular location">
    <molecule>Isoform 1</molecule>
    <subcellularLocation>
        <location evidence="20">Cell membrane</location>
        <topology evidence="20">Single-pass membrane protein</topology>
    </subcellularLocation>
    <text>Colocalizes with isoform 2 at the plasma membrane.</text>
</comment>
<comment type="subcellular location">
    <molecule>Isoform 2</molecule>
    <subcellularLocation>
        <location>Cytoplasm</location>
    </subcellularLocation>
    <subcellularLocation>
        <location>Cell membrane</location>
    </subcellularLocation>
    <subcellularLocation>
        <location evidence="22">Secreted</location>
    </subcellularLocation>
    <text>Transported to the cell membrane and probably secreted to function as an autocrine or paracrine signaling molecule. The lack of a hydrophobic segment sequence suggests that isoform 2 is released by damaged cells or is secreted by a mechanism differing from that used for other secretory proteins.</text>
</comment>
<comment type="subcellular location">
    <molecule>Ten-1 intracellular domain</molecule>
    <subcellularLocation>
        <location evidence="1">Nucleus</location>
    </subcellularLocation>
    <subcellularLocation>
        <location evidence="1">Nucleus speckle</location>
    </subcellularLocation>
    <subcellularLocation>
        <location evidence="1">Nucleus matrix</location>
    </subcellularLocation>
    <subcellularLocation>
        <location evidence="1">Cytoplasm</location>
        <location evidence="1">Cytoskeleton</location>
    </subcellularLocation>
</comment>
<comment type="subcellular location">
    <molecule>Teneurin C-terminal-associated peptide</molecule>
    <subcellularLocation>
        <location evidence="22">Nucleus</location>
    </subcellularLocation>
    <subcellularLocation>
        <location>Cytoplasm</location>
    </subcellularLocation>
    <subcellularLocation>
        <location>Cell membrane</location>
    </subcellularLocation>
    <text>Colocalizes with isoform 1 at the plasma membrane. Colocalizes with the dystroglycan complex at the cell membrane in hippocampal cells. Binds hippocampal cell membranes and is incorporated in the cytoplasm by endocytosis in a caveoli-dependent manner. Upon cell internalization is transported arround and in the nucleus.</text>
</comment>
<comment type="alternative products">
    <event type="alternative splicing"/>
    <isoform>
        <id>Q9WTS4-1</id>
        <name>1</name>
        <sequence type="displayed"/>
    </isoform>
    <isoform>
        <id>Q9WTS4-2</id>
        <name>2</name>
        <name>TCAP-1</name>
        <sequence type="described" ref="VSP_045018"/>
    </isoform>
</comment>
<comment type="tissue specificity">
    <text evidence="7 8 9 20">Isoform 1 and isoform 2 are expressed in the brain. Isoform 2 is expressed in the granular layer of the dentate gyrus and the pyramidal layer (Py) of the CA1, CA2 and CA3 of the hippocampus (at protein level). Expressed in the cortex, thalamus, CA1, CA2, CA3, dentate gyrus and granular layer of the hippocampus. Weakly expressed in kidney, testis and lung.</text>
</comment>
<comment type="developmental stage">
    <text evidence="20">Isoform 1 and isoform 2 are expressed in hippocampal cells at 14 dpc (at protein level).</text>
</comment>
<comment type="domain">
    <text>EGF-like domains 2 and 5 which have an odd number of cysteines might enable the formation of intermolecular disulfide bonds.</text>
</comment>
<comment type="domain">
    <text>Cytoplasmic proline-rich regions could serve as docking domains for intracellular SH3-containing proteins.</text>
</comment>
<comment type="PTM">
    <molecule>Isoform 2</molecule>
    <text evidence="20">Once secreted, may also be cleaved to give rise to the TCAP-1 form.</text>
</comment>
<comment type="PTM">
    <molecule>Teneurin C-terminal-associated peptide</molecule>
    <text evidence="20">Derives from the plasma membrane form by proteolytic processing. Further proteolytic cleavage may generate 11.9 and 4.7 kDa bioactive peptides.</text>
</comment>
<comment type="miscellaneous">
    <molecule>Teneurin C-terminal-associated peptide</molecule>
    <text evidence="23">Binds to the plasma membrane and may be internalized by a receptor- and caveolae-mediated endocytosis manner to reach cytosolic compartments in a dynamin-dependent manner.</text>
</comment>
<comment type="similarity">
    <text evidence="22">Belongs to the tenascin family. Teneurin subfamily.</text>
</comment>
<evidence type="ECO:0000250" key="1"/>
<evidence type="ECO:0000250" key="2">
    <source>
        <dbReference type="UniProtKB" id="Q9UKZ4"/>
    </source>
</evidence>
<evidence type="ECO:0000255" key="3"/>
<evidence type="ECO:0000255" key="4">
    <source>
        <dbReference type="PROSITE-ProRule" id="PRU00076"/>
    </source>
</evidence>
<evidence type="ECO:0000255" key="5">
    <source>
        <dbReference type="PROSITE-ProRule" id="PRU00694"/>
    </source>
</evidence>
<evidence type="ECO:0000256" key="6">
    <source>
        <dbReference type="SAM" id="MobiDB-lite"/>
    </source>
</evidence>
<evidence type="ECO:0000269" key="7">
    <source>
    </source>
</evidence>
<evidence type="ECO:0000269" key="8">
    <source>
    </source>
</evidence>
<evidence type="ECO:0000269" key="9">
    <source>
    </source>
</evidence>
<evidence type="ECO:0000269" key="10">
    <source>
    </source>
</evidence>
<evidence type="ECO:0000269" key="11">
    <source>
    </source>
</evidence>
<evidence type="ECO:0000269" key="12">
    <source>
    </source>
</evidence>
<evidence type="ECO:0000269" key="13">
    <source>
    </source>
</evidence>
<evidence type="ECO:0000269" key="14">
    <source>
    </source>
</evidence>
<evidence type="ECO:0000269" key="15">
    <source>
    </source>
</evidence>
<evidence type="ECO:0000269" key="16">
    <source>
    </source>
</evidence>
<evidence type="ECO:0000269" key="17">
    <source>
    </source>
</evidence>
<evidence type="ECO:0000269" key="18">
    <source>
    </source>
</evidence>
<evidence type="ECO:0000269" key="19">
    <source>
    </source>
</evidence>
<evidence type="ECO:0000269" key="20">
    <source>
    </source>
</evidence>
<evidence type="ECO:0000269" key="21">
    <source>
    </source>
</evidence>
<evidence type="ECO:0000305" key="22"/>
<evidence type="ECO:0000305" key="23">
    <source>
    </source>
</evidence>
<evidence type="ECO:0007744" key="24">
    <source>
    </source>
</evidence>
<sequence length="2731" mass="305795">MEQTDCKPYQPLSKVKHEMDLAYTSSSDESEDGRKPRQSFNSRETLHEYNQELRRNYNSQSRKRKDVEKSTQEIEFCETPPTLCSGYHTDMHSVSRHGYQLEMGSDVDTETEGAASPDHALRMWIRGMKSEHSSCLSSRANSALSLTDTDHERKSDGENGFKFSPVCCDMEAPADSAQDMQSSPHNQFTFRPLPPPPPPPHACTCARKPPPTVDSLQRRSMTTRSQPSPAAPAPPTSTQDSVHLHNSWVLNSNIPLETRHFLFKHGSGSSAIFSAASQNYPLTSNTVYSPPPRPLPRSTFSRPAFTFNKPYRCCNWKCTALSATAITVTLALLLAYVIAVHLFGLTWQLQPVGQIYANGISNGNPGTESMDTTYSPIGGRVSDKSEKKVFQKGRAIDTGEVDIGAQVMQTIPPGLFWRFQITIHHPIYLKFNISLAKDSLLGIYGRRNIPPTHTQFDFVKLMDGKQLVKQDSKSSDDIQHSPRNLILTSLQETGFIEYMDQGPWYLAFYNDGKKMEQVFVLTTAIEIMDDCSTNCNGNGECISGHCHCFPGFLGPDCARDSCPVLCGGNGEYEKGHCVCRNGWKGPECDVPEEQCIDPTCFGHGTCIMGVCICVPGYKGEICEEEDCLDPMCSSHGICVKGECHCSTGWGGVNCETPLPICQEQCSGHGTFLLDTGVCSCDPKWTGSDCSTELCTMECGSHGVCSRGICQCEEGWVGPTCEERSCHSHCAEHGQCKDGKCECSPGWEGDHCTIAHYLDAVRDGCPGLCFGNGRCTLDQNGWHCVCQVGWSGTGCNIVMEMLCGDNLDNDGDGLTDCVDPDCCQQSNCYVSPLCQGSPDPLDLIQQSQPLFSQHTSRLFYDRIKFLIGKDSTHVVPQDISFDSRRACVIRGQVVAVDGTPLVGVNVSFLHHSDYGFTISRQDGSFDLVAIGGISVVLIFDRSPFLSEKRTLWLPWNQFIVVEKVIMQRIVADAPSCDISNFISPNPIVLPSPLTSFGGSCPERGTIVPELQVVQEEIPIPSSFVRLSYLSSRTPGYKTLLRILLTHSTIPVGMIKVHLTVSVEGRLTQKWFPAAINLVYTFAWNKTDIYGQKVWGLAEALVSVGYEYEMCPEFILWEQRTVVLQGFEMDASNLGGWSLNKHHIFNPQSGIIHKGNGENMFISQQPPVIATIMGNGHQRSVACTNCNGPAHNNKLFAPVALASGPDGSVYVGDFNFVRRIFPSGNSVSILELRNRDTRHSTSPAHKYYLAMDPMSESLYLSDTNTRKVYKLKSLVETKDLSKNFEVVAGTGDQCLPFDQSHCGDGGKASEASLNSPRGITVDRHGFIYFVDGTMIRRIDENAVITTVIGSNGLTSTQPLSCDSGMDITQVRLEWPTDLAVNPMDNSLYVLDNNIVLQISENRRVRIIAGRPIHCQVPGIDHFLVSKVAIHSTLESARAISVSHSGLLFIAETDERKVNRIQQVTTNGEISIIAGAPTDCDCKIDPNCDCFSGDGGYAKDAKMKAPSSLAVSPDGTLYVADLGNVRIRTISKNQAHLNDMNLYEIASPADQELYQFTVNGTHLHTMNLITRDYVYNFTYNAEGDLGAITSSNGNSVHIRRDAGGMPLWLVVPGGQVYWLTISSNGVLKRVSAQGYNLALMTYPGNTGLLATKSNENGWTTVYEYDPEGHLTNATFPTGEVSSFHSDLEKLTKVALDTSNRENVLMSTNLTATSTIYILKQENTQSTYRVSPDGSLRVTFASGMEINLSSEPHILAGAVNPTLGKCNISLPGEHNANLIEWRQRKEQNKGNVSAFERRLRAHNRNLLSIDFDHMTRTGKIYDDHRKFTLRILYDQTGRPILWSPVSRYNEVNITYSPSGLVTFIQRGTWNEKMEYDQSGKIISRTWADGKIWSYTYLEKSVMLLLHSQRRYIFEYDQSDCLLSVTMPSMVRHSLQTMLSVGYYRNIYTPPDSSTSFIQDYSRDGRLLQTLHLGTGRRVLYKYTKQARLSEILYDTTQVTLTYEESSGVIKTIHLMHDGFICTIRYRQTGPLIGRQIFRFSEEGLVNARFDYSYNNFRVTSMQAVINETPLPIDLYRYVDVSGRTEQFGKFSVINYDLNQVITTTVMKHTKIFNANGQVIEVQYEILKAIAYWMTIQYDNMGRMVICDIRVGVDANITRYFYEYDADGQLQTVSVNDKIQWRYSYDLNGNINLLSHGNSARLTPLRYDLRDRITRLGEIQYKMDEDGFLRQRGNDIFEYNSNGLLQKAYNKVSGWTVQYYYDGLGRRVASKSSLGQHLQFFYADLANPIRVTHLYNHTSAEITSLYYDLQGHLIAMELSSGEEYYVACDNMGTPLAVFSSRGQVIKEILYTPYGDIYHDTYPDFEVIIGFHGGLYDFLTKLVHLGQRDYDVVAGRWTTPNHHIWKQLNLLPKPFNLYSFENNYPVGKIQDVAKYTTDIGTWLELFGFQLHNVLPGFPKPELENMELTYELLQLQTKTQEWDPGKMILGIQCELQKQLRNFISLDQLPMTPQYNEGRCLEGGKQPRFAAVPSVFGKGIKFAIKEGIVTADIIGVANEDSRRLAAILNNAHYLENLHFTIEGRDTHYFIKLGSLEEDLVLIGNTGGRRILENGVNVTVSQMTSVLNGRTRRFADIQLQHGALCFNIRYGTTVEEEKNHVLEMARQRAVAQAWTQEQRRLQEGEEGTRVWTEGEKQQLLGTGRVQGYDGYFVLSVEQYLELSDSANNIHFMRQSEIGRR</sequence>
<accession>Q9WTS4</accession>
<accession>Q8CAT1</accession>
<proteinExistence type="evidence at protein level"/>
<protein>
    <recommendedName>
        <fullName>Teneurin-1</fullName>
        <shortName>Ten-1</shortName>
    </recommendedName>
    <alternativeName>
        <fullName>Protein Odd Oz/ten-m homolog 1</fullName>
    </alternativeName>
    <alternativeName>
        <fullName>Tenascin-M1</fullName>
        <shortName>Ten-m1</shortName>
    </alternativeName>
    <alternativeName>
        <fullName>Teneurin transmembrane protein 1</fullName>
    </alternativeName>
    <component>
        <recommendedName>
            <fullName>Ten-1 intracellular domain</fullName>
            <shortName>IDten-1</shortName>
            <shortName>Ten-1 ICD</shortName>
        </recommendedName>
    </component>
    <component>
        <recommendedName>
            <fullName>Teneurin C-terminal-associated peptide</fullName>
            <shortName>TCPA-1</shortName>
        </recommendedName>
        <alternativeName>
            <fullName>Ten-1 extracellular domain</fullName>
            <shortName>Ten-1 ECD</shortName>
        </alternativeName>
    </component>
</protein>
<name>TEN1_MOUSE</name>
<organism>
    <name type="scientific">Mus musculus</name>
    <name type="common">Mouse</name>
    <dbReference type="NCBI Taxonomy" id="10090"/>
    <lineage>
        <taxon>Eukaryota</taxon>
        <taxon>Metazoa</taxon>
        <taxon>Chordata</taxon>
        <taxon>Craniata</taxon>
        <taxon>Vertebrata</taxon>
        <taxon>Euteleostomi</taxon>
        <taxon>Mammalia</taxon>
        <taxon>Eutheria</taxon>
        <taxon>Euarchontoglires</taxon>
        <taxon>Glires</taxon>
        <taxon>Rodentia</taxon>
        <taxon>Myomorpha</taxon>
        <taxon>Muroidea</taxon>
        <taxon>Muridae</taxon>
        <taxon>Murinae</taxon>
        <taxon>Mus</taxon>
        <taxon>Mus</taxon>
    </lineage>
</organism>
<keyword id="KW-0025">Alternative splicing</keyword>
<keyword id="KW-1003">Cell membrane</keyword>
<keyword id="KW-0165">Cleavage on pair of basic residues</keyword>
<keyword id="KW-0963">Cytoplasm</keyword>
<keyword id="KW-0206">Cytoskeleton</keyword>
<keyword id="KW-1015">Disulfide bond</keyword>
<keyword id="KW-0245">EGF-like domain</keyword>
<keyword id="KW-0325">Glycoprotein</keyword>
<keyword id="KW-0472">Membrane</keyword>
<keyword id="KW-0527">Neuropeptide</keyword>
<keyword id="KW-0539">Nucleus</keyword>
<keyword id="KW-0597">Phosphoprotein</keyword>
<keyword id="KW-1185">Reference proteome</keyword>
<keyword id="KW-0677">Repeat</keyword>
<keyword id="KW-0678">Repressor</keyword>
<keyword id="KW-0964">Secreted</keyword>
<keyword id="KW-0346">Stress response</keyword>
<keyword id="KW-0804">Transcription</keyword>
<keyword id="KW-0805">Transcription regulation</keyword>
<keyword id="KW-0812">Transmembrane</keyword>
<keyword id="KW-1133">Transmembrane helix</keyword>
<feature type="chain" id="PRO_0000259499" description="Teneurin-1">
    <location>
        <begin position="1"/>
        <end position="2731"/>
    </location>
</feature>
<feature type="chain" id="PRO_0000421007" description="Ten-1 intracellular domain" evidence="1">
    <location>
        <begin position="1"/>
        <end status="unknown"/>
    </location>
</feature>
<feature type="chain" id="PRO_0000421008" description="Teneurin C-terminal-associated peptide">
    <location>
        <begin position="2602"/>
        <end position="2731"/>
    </location>
</feature>
<feature type="topological domain" description="Cytoplasmic" evidence="3">
    <location>
        <begin position="1"/>
        <end position="324"/>
    </location>
</feature>
<feature type="transmembrane region" description="Helical" evidence="3">
    <location>
        <begin position="325"/>
        <end position="345"/>
    </location>
</feature>
<feature type="topological domain" description="Extracellular" evidence="3">
    <location>
        <begin position="346"/>
        <end position="2731"/>
    </location>
</feature>
<feature type="domain" description="Teneurin N-terminal" evidence="5">
    <location>
        <begin position="1"/>
        <end position="318"/>
    </location>
</feature>
<feature type="domain" description="EGF-like 1" evidence="4">
    <location>
        <begin position="527"/>
        <end position="558"/>
    </location>
</feature>
<feature type="domain" description="EGF-like 2" evidence="4">
    <location>
        <begin position="559"/>
        <end position="590"/>
    </location>
</feature>
<feature type="domain" description="EGF-like 3" evidence="4">
    <location>
        <begin position="591"/>
        <end position="623"/>
    </location>
</feature>
<feature type="domain" description="EGF-like 4" evidence="4">
    <location>
        <begin position="624"/>
        <end position="656"/>
    </location>
</feature>
<feature type="domain" description="EGF-like 5" evidence="4">
    <location>
        <begin position="657"/>
        <end position="690"/>
    </location>
</feature>
<feature type="domain" description="EGF-like 6" evidence="4">
    <location>
        <begin position="691"/>
        <end position="720"/>
    </location>
</feature>
<feature type="domain" description="EGF-like 7" evidence="4">
    <location>
        <begin position="721"/>
        <end position="752"/>
    </location>
</feature>
<feature type="domain" description="EGF-like 8" evidence="4">
    <location>
        <begin position="760"/>
        <end position="795"/>
    </location>
</feature>
<feature type="repeat" description="NHL 1">
    <location>
        <begin position="1193"/>
        <end position="1218"/>
    </location>
</feature>
<feature type="repeat" description="NHL 2">
    <location>
        <begin position="1298"/>
        <end position="1342"/>
    </location>
</feature>
<feature type="repeat" description="NHL 3">
    <location>
        <begin position="1357"/>
        <end position="1408"/>
    </location>
</feature>
<feature type="repeat" description="NHL 4">
    <location>
        <begin position="1420"/>
        <end position="1464"/>
    </location>
</feature>
<feature type="repeat" description="NHL 5">
    <location>
        <begin position="1487"/>
        <end position="1530"/>
    </location>
</feature>
<feature type="repeat" description="YD 1">
    <location>
        <begin position="1540"/>
        <end position="1559"/>
    </location>
</feature>
<feature type="repeat" description="YD 2">
    <location>
        <begin position="1576"/>
        <end position="1596"/>
    </location>
</feature>
<feature type="repeat" description="YD 3">
    <location>
        <begin position="1614"/>
        <end position="1638"/>
    </location>
</feature>
<feature type="repeat" description="YD 4">
    <location>
        <begin position="1639"/>
        <end position="1660"/>
    </location>
</feature>
<feature type="repeat" description="YD 5">
    <location>
        <begin position="1661"/>
        <end position="1681"/>
    </location>
</feature>
<feature type="repeat" description="YD 6">
    <location>
        <begin position="1851"/>
        <end position="1870"/>
    </location>
</feature>
<feature type="repeat" description="YD 7">
    <location>
        <begin position="1871"/>
        <end position="1891"/>
    </location>
</feature>
<feature type="repeat" description="YD 8">
    <location>
        <begin position="1892"/>
        <end position="1910"/>
    </location>
</feature>
<feature type="repeat" description="YD 9">
    <location>
        <begin position="1911"/>
        <end position="1931"/>
    </location>
</feature>
<feature type="repeat" description="YD 10">
    <location>
        <begin position="1939"/>
        <end position="1955"/>
    </location>
</feature>
<feature type="repeat" description="YD 11">
    <location>
        <begin position="1956"/>
        <end position="1975"/>
    </location>
</feature>
<feature type="repeat" description="YD 12">
    <location>
        <begin position="1976"/>
        <end position="1995"/>
    </location>
</feature>
<feature type="repeat" description="YD 13">
    <location>
        <begin position="1998"/>
        <end position="2018"/>
    </location>
</feature>
<feature type="repeat" description="YD 14">
    <location>
        <begin position="2021"/>
        <end position="2041"/>
    </location>
</feature>
<feature type="repeat" description="YD 15">
    <location>
        <begin position="2091"/>
        <end position="2111"/>
    </location>
</feature>
<feature type="repeat" description="YD 16">
    <location>
        <begin position="2119"/>
        <end position="2139"/>
    </location>
</feature>
<feature type="repeat" description="YD 17">
    <location>
        <begin position="2159"/>
        <end position="2179"/>
    </location>
</feature>
<feature type="repeat" description="YD 18">
    <location>
        <begin position="2180"/>
        <end position="2200"/>
    </location>
</feature>
<feature type="repeat" description="YD 19">
    <location>
        <begin position="2202"/>
        <end position="2222"/>
    </location>
</feature>
<feature type="repeat" description="YD 20">
    <location>
        <begin position="2234"/>
        <end position="2254"/>
    </location>
</feature>
<feature type="repeat" description="YD 21">
    <location>
        <begin position="2256"/>
        <end position="2276"/>
    </location>
</feature>
<feature type="repeat" description="YD 22">
    <location>
        <begin position="2302"/>
        <end position="2319"/>
    </location>
</feature>
<feature type="repeat" description="YD 23">
    <location>
        <begin position="2320"/>
        <end position="2343"/>
    </location>
</feature>
<feature type="region of interest" description="Disordered" evidence="6">
    <location>
        <begin position="1"/>
        <end position="72"/>
    </location>
</feature>
<feature type="region of interest" description="Disordered" evidence="6">
    <location>
        <begin position="175"/>
        <end position="241"/>
    </location>
</feature>
<feature type="short sequence motif" description="Nuclear localization signal (NLS)" evidence="1">
    <location>
        <begin position="62"/>
        <end position="65"/>
    </location>
</feature>
<feature type="short sequence motif" description="Required for interaction with SORBS1 (Ten-1 ICD form)" evidence="1">
    <location>
        <begin position="290"/>
        <end position="297"/>
    </location>
</feature>
<feature type="compositionally biased region" description="Basic and acidic residues" evidence="6">
    <location>
        <begin position="44"/>
        <end position="55"/>
    </location>
</feature>
<feature type="compositionally biased region" description="Polar residues" evidence="6">
    <location>
        <begin position="178"/>
        <end position="189"/>
    </location>
</feature>
<feature type="compositionally biased region" description="Pro residues" evidence="6">
    <location>
        <begin position="192"/>
        <end position="201"/>
    </location>
</feature>
<feature type="compositionally biased region" description="Polar residues" evidence="6">
    <location>
        <begin position="214"/>
        <end position="224"/>
    </location>
</feature>
<feature type="site" description="Cleavage" evidence="22">
    <location>
        <begin position="2601"/>
        <end position="2602"/>
    </location>
</feature>
<feature type="modified residue" description="Phosphoserine" evidence="24">
    <location>
        <position position="105"/>
    </location>
</feature>
<feature type="modified residue" description="Phosphothreonine" evidence="24">
    <location>
        <position position="109"/>
    </location>
</feature>
<feature type="modified residue" description="Phosphoserine" evidence="24">
    <location>
        <position position="116"/>
    </location>
</feature>
<feature type="modified residue" description="Phosphoserine" evidence="2">
    <location>
        <position position="2586"/>
    </location>
</feature>
<feature type="glycosylation site" description="N-linked (GlcNAc...) asparagine" evidence="3">
    <location>
        <position position="432"/>
    </location>
</feature>
<feature type="glycosylation site" description="N-linked (GlcNAc...) asparagine" evidence="3">
    <location>
        <position position="904"/>
    </location>
</feature>
<feature type="glycosylation site" description="N-linked (GlcNAc...) asparagine" evidence="3">
    <location>
        <position position="1083"/>
    </location>
</feature>
<feature type="glycosylation site" description="N-linked (GlcNAc...) asparagine" evidence="3">
    <location>
        <position position="1556"/>
    </location>
</feature>
<feature type="glycosylation site" description="N-linked (GlcNAc...) asparagine" evidence="3">
    <location>
        <position position="1573"/>
    </location>
</feature>
<feature type="glycosylation site" description="N-linked (GlcNAc...) asparagine" evidence="3">
    <location>
        <position position="1669"/>
    </location>
</feature>
<feature type="glycosylation site" description="N-linked (GlcNAc...) asparagine" evidence="3">
    <location>
        <position position="1705"/>
    </location>
</feature>
<feature type="glycosylation site" description="N-linked (GlcNAc...) asparagine" evidence="3">
    <location>
        <position position="1743"/>
    </location>
</feature>
<feature type="glycosylation site" description="N-linked (GlcNAc...) asparagine" evidence="3">
    <location>
        <position position="1763"/>
    </location>
</feature>
<feature type="glycosylation site" description="N-linked (GlcNAc...) asparagine" evidence="3">
    <location>
        <position position="1787"/>
    </location>
</feature>
<feature type="glycosylation site" description="N-linked (GlcNAc...) asparagine" evidence="3">
    <location>
        <position position="1848"/>
    </location>
</feature>
<feature type="glycosylation site" description="N-linked (GlcNAc...) asparagine" evidence="3">
    <location>
        <position position="2151"/>
    </location>
</feature>
<feature type="glycosylation site" description="N-linked (GlcNAc...) asparagine" evidence="3">
    <location>
        <position position="2291"/>
    </location>
</feature>
<feature type="glycosylation site" description="N-linked (GlcNAc...) asparagine" evidence="3">
    <location>
        <position position="2608"/>
    </location>
</feature>
<feature type="disulfide bond" evidence="4">
    <location>
        <begin position="531"/>
        <end position="541"/>
    </location>
</feature>
<feature type="disulfide bond" evidence="4">
    <location>
        <begin position="535"/>
        <end position="546"/>
    </location>
</feature>
<feature type="disulfide bond" evidence="4">
    <location>
        <begin position="548"/>
        <end position="557"/>
    </location>
</feature>
<feature type="disulfide bond" evidence="4">
    <location>
        <begin position="566"/>
        <end position="577"/>
    </location>
</feature>
<feature type="disulfide bond" evidence="4">
    <location>
        <begin position="579"/>
        <end position="588"/>
    </location>
</feature>
<feature type="disulfide bond" evidence="4">
    <location>
        <begin position="595"/>
        <end position="606"/>
    </location>
</feature>
<feature type="disulfide bond" evidence="4">
    <location>
        <begin position="600"/>
        <end position="611"/>
    </location>
</feature>
<feature type="disulfide bond" evidence="4">
    <location>
        <begin position="613"/>
        <end position="622"/>
    </location>
</feature>
<feature type="disulfide bond" evidence="4">
    <location>
        <begin position="627"/>
        <end position="638"/>
    </location>
</feature>
<feature type="disulfide bond" evidence="4">
    <location>
        <begin position="632"/>
        <end position="643"/>
    </location>
</feature>
<feature type="disulfide bond" evidence="4">
    <location>
        <begin position="645"/>
        <end position="654"/>
    </location>
</feature>
<feature type="disulfide bond" evidence="4">
    <location>
        <begin position="665"/>
        <end position="678"/>
    </location>
</feature>
<feature type="disulfide bond" evidence="4">
    <location>
        <begin position="680"/>
        <end position="689"/>
    </location>
</feature>
<feature type="disulfide bond" evidence="4">
    <location>
        <begin position="694"/>
        <end position="704"/>
    </location>
</feature>
<feature type="disulfide bond" evidence="4">
    <location>
        <begin position="698"/>
        <end position="709"/>
    </location>
</feature>
<feature type="disulfide bond" evidence="4">
    <location>
        <begin position="711"/>
        <end position="720"/>
    </location>
</feature>
<feature type="disulfide bond" evidence="4">
    <location>
        <begin position="725"/>
        <end position="735"/>
    </location>
</feature>
<feature type="disulfide bond" evidence="4">
    <location>
        <begin position="729"/>
        <end position="740"/>
    </location>
</feature>
<feature type="disulfide bond" evidence="4">
    <location>
        <begin position="742"/>
        <end position="751"/>
    </location>
</feature>
<feature type="disulfide bond" evidence="4">
    <location>
        <begin position="764"/>
        <end position="774"/>
    </location>
</feature>
<feature type="disulfide bond" evidence="4">
    <location>
        <begin position="768"/>
        <end position="783"/>
    </location>
</feature>
<feature type="disulfide bond" evidence="4">
    <location>
        <begin position="785"/>
        <end position="794"/>
    </location>
</feature>
<feature type="splice variant" id="VSP_045018" description="In isoform 2." evidence="22">
    <location>
        <begin position="1"/>
        <end position="2613"/>
    </location>
</feature>